<organism>
    <name type="scientific">Lacticaseibacillus casei</name>
    <name type="common">Lactobacillus casei</name>
    <dbReference type="NCBI Taxonomy" id="1582"/>
    <lineage>
        <taxon>Bacteria</taxon>
        <taxon>Bacillati</taxon>
        <taxon>Bacillota</taxon>
        <taxon>Bacilli</taxon>
        <taxon>Lactobacillales</taxon>
        <taxon>Lactobacillaceae</taxon>
        <taxon>Lacticaseibacillus</taxon>
    </lineage>
</organism>
<comment type="function">
    <text evidence="1">Catalyzes the phosphorylation of 5-dehydro-2-deoxy-D-gluconate (2-deoxy-5-keto-D-gluconate or DKG) to 6-phospho-5-dehydro-2-deoxy-D-gluconate (DKGP).</text>
</comment>
<comment type="catalytic activity">
    <reaction evidence="1">
        <text>5-dehydro-2-deoxy-D-gluconate + ATP = 6-phospho-5-dehydro-2-deoxy-D-gluconate + ADP + H(+)</text>
        <dbReference type="Rhea" id="RHEA:13497"/>
        <dbReference type="ChEBI" id="CHEBI:15378"/>
        <dbReference type="ChEBI" id="CHEBI:16669"/>
        <dbReference type="ChEBI" id="CHEBI:30616"/>
        <dbReference type="ChEBI" id="CHEBI:57949"/>
        <dbReference type="ChEBI" id="CHEBI:456216"/>
        <dbReference type="EC" id="2.7.1.92"/>
    </reaction>
</comment>
<comment type="pathway">
    <text evidence="1">Polyol metabolism; myo-inositol degradation into acetyl-CoA; acetyl-CoA from myo-inositol: step 5/7.</text>
</comment>
<comment type="similarity">
    <text evidence="1">Belongs to the carbohydrate kinase PfkB family.</text>
</comment>
<protein>
    <recommendedName>
        <fullName evidence="1">5-dehydro-2-deoxygluconokinase</fullName>
        <ecNumber evidence="1">2.7.1.92</ecNumber>
    </recommendedName>
    <alternativeName>
        <fullName evidence="1">2-deoxy-5-keto-D-gluconate kinase</fullName>
        <shortName evidence="1">DKG kinase</shortName>
    </alternativeName>
</protein>
<keyword id="KW-0067">ATP-binding</keyword>
<keyword id="KW-0418">Kinase</keyword>
<keyword id="KW-0547">Nucleotide-binding</keyword>
<keyword id="KW-0808">Transferase</keyword>
<gene>
    <name evidence="1" type="primary">iolC</name>
</gene>
<evidence type="ECO:0000255" key="1">
    <source>
        <dbReference type="HAMAP-Rule" id="MF_01668"/>
    </source>
</evidence>
<sequence>MPQKFDLIAIGRAAVDLNAVEYNRPLEDTKTFAKFVGGSPANIAIGSAKLGQKVGFIGKVSDDQLGHYVTQYMASVGIDTSNMVKDDTGHKIGLTFTEIISPEESDILMYRNEAADLYLNAHEVSRAYLAQTKMLVISGTGLAQSPSREAILKALLIAKELGVEVIFELDYRPYTWQNAEETSLYYQLVAQKADVIIGTRDEFDVLENHQGRTDQETIATLFQYDANLIVIKSGIQGSNAYTKAGETYHFGVFKTKVLKSFGAGDSFAAGFLYAYQHQLGLETALKYGSAAASIVISQLSSSEAMPNLDQLTAFIEKAEAQEVHQS</sequence>
<feature type="chain" id="PRO_0000352301" description="5-dehydro-2-deoxygluconokinase">
    <location>
        <begin position="1"/>
        <end position="326"/>
    </location>
</feature>
<accession>A5YBJ5</accession>
<reference key="1">
    <citation type="journal article" date="2007" name="Appl. Environ. Microbiol.">
        <title>Identification of a gene cluster allowing Lactobacillus casei BL23 the utilization of myo-inositol.</title>
        <authorList>
            <person name="Yebra M.J."/>
            <person name="Zuniga M."/>
            <person name="Beaufils S."/>
            <person name="Perez-Martinez G."/>
            <person name="Deutscher J."/>
            <person name="Monedero V."/>
        </authorList>
    </citation>
    <scope>NUCLEOTIDE SEQUENCE [GENOMIC DNA]</scope>
    <source>
        <strain>BL23</strain>
    </source>
</reference>
<dbReference type="EC" id="2.7.1.92" evidence="1"/>
<dbReference type="EMBL" id="EF382358">
    <property type="protein sequence ID" value="ABP57764.1"/>
    <property type="molecule type" value="Genomic_DNA"/>
</dbReference>
<dbReference type="SMR" id="A5YBJ5"/>
<dbReference type="STRING" id="1582.AAW28_06905"/>
<dbReference type="eggNOG" id="COG0524">
    <property type="taxonomic scope" value="Bacteria"/>
</dbReference>
<dbReference type="OMA" id="DDQHGRF"/>
<dbReference type="UniPathway" id="UPA00076">
    <property type="reaction ID" value="UER00146"/>
</dbReference>
<dbReference type="GO" id="GO:0047590">
    <property type="term" value="F:5-dehydro-2-deoxygluconokinase activity"/>
    <property type="evidence" value="ECO:0007669"/>
    <property type="project" value="UniProtKB-UniRule"/>
</dbReference>
<dbReference type="GO" id="GO:0005524">
    <property type="term" value="F:ATP binding"/>
    <property type="evidence" value="ECO:0007669"/>
    <property type="project" value="UniProtKB-UniRule"/>
</dbReference>
<dbReference type="GO" id="GO:0019310">
    <property type="term" value="P:inositol catabolic process"/>
    <property type="evidence" value="ECO:0007669"/>
    <property type="project" value="UniProtKB-UniRule"/>
</dbReference>
<dbReference type="CDD" id="cd01166">
    <property type="entry name" value="KdgK"/>
    <property type="match status" value="1"/>
</dbReference>
<dbReference type="Gene3D" id="3.40.1190.20">
    <property type="match status" value="1"/>
</dbReference>
<dbReference type="Gene3D" id="2.20.150.10">
    <property type="entry name" value="putative 5-dehydro-2- deoxygluconokinase"/>
    <property type="match status" value="1"/>
</dbReference>
<dbReference type="HAMAP" id="MF_01668">
    <property type="entry name" value="IolC"/>
    <property type="match status" value="1"/>
</dbReference>
<dbReference type="InterPro" id="IPR002173">
    <property type="entry name" value="Carboh/pur_kinase_PfkB_CS"/>
</dbReference>
<dbReference type="InterPro" id="IPR022841">
    <property type="entry name" value="DKG_kinase_firmi"/>
</dbReference>
<dbReference type="InterPro" id="IPR030830">
    <property type="entry name" value="Myo_inos_IolC"/>
</dbReference>
<dbReference type="InterPro" id="IPR023314">
    <property type="entry name" value="Myo_inos_IolC-like_sf"/>
</dbReference>
<dbReference type="InterPro" id="IPR050306">
    <property type="entry name" value="PfkB_Carbo_kinase"/>
</dbReference>
<dbReference type="InterPro" id="IPR011611">
    <property type="entry name" value="PfkB_dom"/>
</dbReference>
<dbReference type="InterPro" id="IPR029056">
    <property type="entry name" value="Ribokinase-like"/>
</dbReference>
<dbReference type="NCBIfam" id="TIGR04382">
    <property type="entry name" value="myo_inos_iolC_N"/>
    <property type="match status" value="1"/>
</dbReference>
<dbReference type="PANTHER" id="PTHR43085:SF49">
    <property type="entry name" value="5-DEHYDRO-2-DEOXYGLUCONOKINASE"/>
    <property type="match status" value="1"/>
</dbReference>
<dbReference type="PANTHER" id="PTHR43085">
    <property type="entry name" value="HEXOKINASE FAMILY MEMBER"/>
    <property type="match status" value="1"/>
</dbReference>
<dbReference type="Pfam" id="PF00294">
    <property type="entry name" value="PfkB"/>
    <property type="match status" value="1"/>
</dbReference>
<dbReference type="SUPFAM" id="SSF53613">
    <property type="entry name" value="Ribokinase-like"/>
    <property type="match status" value="1"/>
</dbReference>
<dbReference type="PROSITE" id="PS00584">
    <property type="entry name" value="PFKB_KINASES_2"/>
    <property type="match status" value="1"/>
</dbReference>
<name>IOLC_LACCA</name>
<proteinExistence type="inferred from homology"/>